<organism>
    <name type="scientific">Salmonella arizonae (strain ATCC BAA-731 / CDC346-86 / RSK2980)</name>
    <dbReference type="NCBI Taxonomy" id="41514"/>
    <lineage>
        <taxon>Bacteria</taxon>
        <taxon>Pseudomonadati</taxon>
        <taxon>Pseudomonadota</taxon>
        <taxon>Gammaproteobacteria</taxon>
        <taxon>Enterobacterales</taxon>
        <taxon>Enterobacteriaceae</taxon>
        <taxon>Salmonella</taxon>
    </lineage>
</organism>
<name>DPS_SALAR</name>
<feature type="chain" id="PRO_1000087453" description="DNA protection during starvation protein">
    <location>
        <begin position="1"/>
        <end position="167"/>
    </location>
</feature>
<feature type="binding site" evidence="1">
    <location>
        <position position="51"/>
    </location>
    <ligand>
        <name>Fe cation</name>
        <dbReference type="ChEBI" id="CHEBI:24875"/>
    </ligand>
</feature>
<feature type="binding site" evidence="1">
    <location>
        <position position="78"/>
    </location>
    <ligand>
        <name>Fe cation</name>
        <dbReference type="ChEBI" id="CHEBI:24875"/>
    </ligand>
</feature>
<feature type="binding site" evidence="1">
    <location>
        <position position="82"/>
    </location>
    <ligand>
        <name>Fe cation</name>
        <dbReference type="ChEBI" id="CHEBI:24875"/>
    </ligand>
</feature>
<evidence type="ECO:0000255" key="1">
    <source>
        <dbReference type="HAMAP-Rule" id="MF_01441"/>
    </source>
</evidence>
<protein>
    <recommendedName>
        <fullName evidence="1">DNA protection during starvation protein</fullName>
        <ecNumber evidence="1">1.16.-.-</ecNumber>
    </recommendedName>
</protein>
<reference key="1">
    <citation type="submission" date="2007-11" db="EMBL/GenBank/DDBJ databases">
        <authorList>
            <consortium name="The Salmonella enterica serovar Arizonae Genome Sequencing Project"/>
            <person name="McClelland M."/>
            <person name="Sanderson E.K."/>
            <person name="Porwollik S."/>
            <person name="Spieth J."/>
            <person name="Clifton W.S."/>
            <person name="Fulton R."/>
            <person name="Chunyan W."/>
            <person name="Wollam A."/>
            <person name="Shah N."/>
            <person name="Pepin K."/>
            <person name="Bhonagiri V."/>
            <person name="Nash W."/>
            <person name="Johnson M."/>
            <person name="Thiruvilangam P."/>
            <person name="Wilson R."/>
        </authorList>
    </citation>
    <scope>NUCLEOTIDE SEQUENCE [LARGE SCALE GENOMIC DNA]</scope>
    <source>
        <strain>ATCC BAA-731 / CDC346-86 / RSK2980</strain>
    </source>
</reference>
<gene>
    <name evidence="1" type="primary">dps</name>
    <name type="ordered locus">SARI_02096</name>
</gene>
<comment type="function">
    <text evidence="1">During stationary phase, binds the chromosome non-specifically, forming a highly ordered and stable dps-DNA co-crystal within which chromosomal DNA is condensed and protected from diverse damages. It protects DNA from oxidative damage by sequestering intracellular Fe(2+) ion and storing it in the form of Fe(3+) oxyhydroxide mineral, which can be released after reduction. One hydrogen peroxide oxidizes two Fe(2+) ions, which prevents hydroxyl radical production by the Fenton reaction.</text>
</comment>
<comment type="catalytic activity">
    <reaction evidence="1">
        <text>2 Fe(2+) + H2O2 + 2 H(+) = 2 Fe(3+) + 2 H2O</text>
        <dbReference type="Rhea" id="RHEA:48712"/>
        <dbReference type="ChEBI" id="CHEBI:15377"/>
        <dbReference type="ChEBI" id="CHEBI:15378"/>
        <dbReference type="ChEBI" id="CHEBI:16240"/>
        <dbReference type="ChEBI" id="CHEBI:29033"/>
        <dbReference type="ChEBI" id="CHEBI:29034"/>
    </reaction>
</comment>
<comment type="subunit">
    <text evidence="1">Homododecamer. The 12 subunits form a hollow sphere into which the mineral iron core of up to 500 Fe(3+) can be deposited.</text>
</comment>
<comment type="subcellular location">
    <subcellularLocation>
        <location evidence="1">Cytoplasm</location>
    </subcellularLocation>
</comment>
<comment type="similarity">
    <text evidence="1">Belongs to the Dps family.</text>
</comment>
<sequence>MSTAKLVKTKASNLLYTRNDVSESDKKATVELLNRQVIQFIDLSLITKQAHWNMRGANFIAVHEMLDGFRAALTDHLDTMAERAVQLGGVALGTTQVINSKTPLKSYPLDIHNVQDHLKELADRYAVVANDVRKAIGEAKDEDTADIFTAASRDLDKFLWFIESNIE</sequence>
<dbReference type="EC" id="1.16.-.-" evidence="1"/>
<dbReference type="EMBL" id="CP000880">
    <property type="protein sequence ID" value="ABX21973.1"/>
    <property type="molecule type" value="Genomic_DNA"/>
</dbReference>
<dbReference type="SMR" id="A9MIS0"/>
<dbReference type="STRING" id="41514.SARI_02096"/>
<dbReference type="KEGG" id="ses:SARI_02096"/>
<dbReference type="HOGENOM" id="CLU_098183_1_2_6"/>
<dbReference type="Proteomes" id="UP000002084">
    <property type="component" value="Chromosome"/>
</dbReference>
<dbReference type="GO" id="GO:0005737">
    <property type="term" value="C:cytoplasm"/>
    <property type="evidence" value="ECO:0007669"/>
    <property type="project" value="UniProtKB-SubCell"/>
</dbReference>
<dbReference type="GO" id="GO:0003677">
    <property type="term" value="F:DNA binding"/>
    <property type="evidence" value="ECO:0007669"/>
    <property type="project" value="UniProtKB-UniRule"/>
</dbReference>
<dbReference type="GO" id="GO:0008199">
    <property type="term" value="F:ferric iron binding"/>
    <property type="evidence" value="ECO:0007669"/>
    <property type="project" value="UniProtKB-UniRule"/>
</dbReference>
<dbReference type="GO" id="GO:0016722">
    <property type="term" value="F:oxidoreductase activity, acting on metal ions"/>
    <property type="evidence" value="ECO:0007669"/>
    <property type="project" value="InterPro"/>
</dbReference>
<dbReference type="GO" id="GO:0030261">
    <property type="term" value="P:chromosome condensation"/>
    <property type="evidence" value="ECO:0007669"/>
    <property type="project" value="UniProtKB-KW"/>
</dbReference>
<dbReference type="GO" id="GO:0006879">
    <property type="term" value="P:intracellular iron ion homeostasis"/>
    <property type="evidence" value="ECO:0007669"/>
    <property type="project" value="UniProtKB-KW"/>
</dbReference>
<dbReference type="CDD" id="cd01043">
    <property type="entry name" value="DPS"/>
    <property type="match status" value="1"/>
</dbReference>
<dbReference type="FunFam" id="1.20.1260.10:FF:000003">
    <property type="entry name" value="DNA protection during starvation protein"/>
    <property type="match status" value="1"/>
</dbReference>
<dbReference type="Gene3D" id="1.20.1260.10">
    <property type="match status" value="1"/>
</dbReference>
<dbReference type="HAMAP" id="MF_01441">
    <property type="entry name" value="Dps"/>
    <property type="match status" value="1"/>
</dbReference>
<dbReference type="InterPro" id="IPR002177">
    <property type="entry name" value="DPS_DNA-bd"/>
</dbReference>
<dbReference type="InterPro" id="IPR023188">
    <property type="entry name" value="DPS_DNA-bd_CS"/>
</dbReference>
<dbReference type="InterPro" id="IPR023067">
    <property type="entry name" value="Dps_gammaproteobac"/>
</dbReference>
<dbReference type="InterPro" id="IPR012347">
    <property type="entry name" value="Ferritin-like"/>
</dbReference>
<dbReference type="InterPro" id="IPR009078">
    <property type="entry name" value="Ferritin-like_SF"/>
</dbReference>
<dbReference type="InterPro" id="IPR008331">
    <property type="entry name" value="Ferritin_DPS_dom"/>
</dbReference>
<dbReference type="NCBIfam" id="NF006975">
    <property type="entry name" value="PRK09448.1"/>
    <property type="match status" value="1"/>
</dbReference>
<dbReference type="PANTHER" id="PTHR42932:SF3">
    <property type="entry name" value="DNA PROTECTION DURING STARVATION PROTEIN"/>
    <property type="match status" value="1"/>
</dbReference>
<dbReference type="PANTHER" id="PTHR42932">
    <property type="entry name" value="GENERAL STRESS PROTEIN 20U"/>
    <property type="match status" value="1"/>
</dbReference>
<dbReference type="Pfam" id="PF00210">
    <property type="entry name" value="Ferritin"/>
    <property type="match status" value="1"/>
</dbReference>
<dbReference type="PIRSF" id="PIRSF005900">
    <property type="entry name" value="Dps"/>
    <property type="match status" value="1"/>
</dbReference>
<dbReference type="PRINTS" id="PR01346">
    <property type="entry name" value="HELNAPAPROT"/>
</dbReference>
<dbReference type="SUPFAM" id="SSF47240">
    <property type="entry name" value="Ferritin-like"/>
    <property type="match status" value="1"/>
</dbReference>
<dbReference type="PROSITE" id="PS00818">
    <property type="entry name" value="DPS_1"/>
    <property type="match status" value="1"/>
</dbReference>
<dbReference type="PROSITE" id="PS00819">
    <property type="entry name" value="DPS_2"/>
    <property type="match status" value="1"/>
</dbReference>
<keyword id="KW-0963">Cytoplasm</keyword>
<keyword id="KW-0226">DNA condensation</keyword>
<keyword id="KW-0238">DNA-binding</keyword>
<keyword id="KW-0408">Iron</keyword>
<keyword id="KW-0409">Iron storage</keyword>
<keyword id="KW-0479">Metal-binding</keyword>
<keyword id="KW-0560">Oxidoreductase</keyword>
<keyword id="KW-1185">Reference proteome</keyword>
<accession>A9MIS0</accession>
<proteinExistence type="inferred from homology"/>